<organism>
    <name type="scientific">Vesicomyosocius okutanii subsp. Calyptogena okutanii (strain HA)</name>
    <dbReference type="NCBI Taxonomy" id="412965"/>
    <lineage>
        <taxon>Bacteria</taxon>
        <taxon>Pseudomonadati</taxon>
        <taxon>Pseudomonadota</taxon>
        <taxon>Gammaproteobacteria</taxon>
        <taxon>Candidatus Pseudothioglobaceae</taxon>
        <taxon>Candidatus Vesicomyosocius</taxon>
    </lineage>
</organism>
<protein>
    <recommendedName>
        <fullName evidence="1">Phospho-N-acetylmuramoyl-pentapeptide-transferase</fullName>
        <ecNumber evidence="1">2.7.8.13</ecNumber>
    </recommendedName>
    <alternativeName>
        <fullName evidence="1">UDP-MurNAc-pentapeptide phosphotransferase</fullName>
    </alternativeName>
</protein>
<comment type="function">
    <text evidence="1">Catalyzes the initial step of the lipid cycle reactions in the biosynthesis of the cell wall peptidoglycan: transfers peptidoglycan precursor phospho-MurNAc-pentapeptide from UDP-MurNAc-pentapeptide onto the lipid carrier undecaprenyl phosphate, yielding undecaprenyl-pyrophosphoryl-MurNAc-pentapeptide, known as lipid I.</text>
</comment>
<comment type="catalytic activity">
    <reaction evidence="1">
        <text>UDP-N-acetyl-alpha-D-muramoyl-L-alanyl-gamma-D-glutamyl-meso-2,6-diaminopimeloyl-D-alanyl-D-alanine + di-trans,octa-cis-undecaprenyl phosphate = di-trans,octa-cis-undecaprenyl diphospho-N-acetyl-alpha-D-muramoyl-L-alanyl-D-glutamyl-meso-2,6-diaminopimeloyl-D-alanyl-D-alanine + UMP</text>
        <dbReference type="Rhea" id="RHEA:28386"/>
        <dbReference type="ChEBI" id="CHEBI:57865"/>
        <dbReference type="ChEBI" id="CHEBI:60392"/>
        <dbReference type="ChEBI" id="CHEBI:61386"/>
        <dbReference type="ChEBI" id="CHEBI:61387"/>
        <dbReference type="EC" id="2.7.8.13"/>
    </reaction>
</comment>
<comment type="cofactor">
    <cofactor evidence="1">
        <name>Mg(2+)</name>
        <dbReference type="ChEBI" id="CHEBI:18420"/>
    </cofactor>
</comment>
<comment type="pathway">
    <text evidence="1">Cell wall biogenesis; peptidoglycan biosynthesis.</text>
</comment>
<comment type="subcellular location">
    <subcellularLocation>
        <location evidence="1">Cell inner membrane</location>
        <topology evidence="1">Multi-pass membrane protein</topology>
    </subcellularLocation>
</comment>
<comment type="similarity">
    <text evidence="1">Belongs to the glycosyltransferase 4 family. MraY subfamily.</text>
</comment>
<name>MRAY_VESOH</name>
<feature type="chain" id="PRO_1000003085" description="Phospho-N-acetylmuramoyl-pentapeptide-transferase">
    <location>
        <begin position="1"/>
        <end position="361"/>
    </location>
</feature>
<feature type="transmembrane region" description="Helical" evidence="1">
    <location>
        <begin position="21"/>
        <end position="41"/>
    </location>
</feature>
<feature type="transmembrane region" description="Helical" evidence="1">
    <location>
        <begin position="69"/>
        <end position="89"/>
    </location>
</feature>
<feature type="transmembrane region" description="Helical" evidence="1">
    <location>
        <begin position="93"/>
        <end position="113"/>
    </location>
</feature>
<feature type="transmembrane region" description="Helical" evidence="1">
    <location>
        <begin position="131"/>
        <end position="151"/>
    </location>
</feature>
<feature type="transmembrane region" description="Helical" evidence="1">
    <location>
        <begin position="168"/>
        <end position="188"/>
    </location>
</feature>
<feature type="transmembrane region" description="Helical" evidence="1">
    <location>
        <begin position="200"/>
        <end position="220"/>
    </location>
</feature>
<feature type="transmembrane region" description="Helical" evidence="1">
    <location>
        <begin position="240"/>
        <end position="260"/>
    </location>
</feature>
<feature type="transmembrane region" description="Helical" evidence="1">
    <location>
        <begin position="264"/>
        <end position="284"/>
    </location>
</feature>
<feature type="transmembrane region" description="Helical" evidence="1">
    <location>
        <begin position="289"/>
        <end position="309"/>
    </location>
</feature>
<feature type="transmembrane region" description="Helical" evidence="1">
    <location>
        <begin position="338"/>
        <end position="358"/>
    </location>
</feature>
<accession>A5CXA6</accession>
<keyword id="KW-0131">Cell cycle</keyword>
<keyword id="KW-0132">Cell division</keyword>
<keyword id="KW-0997">Cell inner membrane</keyword>
<keyword id="KW-1003">Cell membrane</keyword>
<keyword id="KW-0133">Cell shape</keyword>
<keyword id="KW-0961">Cell wall biogenesis/degradation</keyword>
<keyword id="KW-0460">Magnesium</keyword>
<keyword id="KW-0472">Membrane</keyword>
<keyword id="KW-0479">Metal-binding</keyword>
<keyword id="KW-0573">Peptidoglycan synthesis</keyword>
<keyword id="KW-1185">Reference proteome</keyword>
<keyword id="KW-0808">Transferase</keyword>
<keyword id="KW-0812">Transmembrane</keyword>
<keyword id="KW-1133">Transmembrane helix</keyword>
<sequence length="361" mass="40406">MFLELINFITQFDTKFNVLNYLTIRALLAMLSALFIGLMLGRIFIKRLQQCHINQVIRTDGPKSHLIKVGTPTMGGILILFAFIVSILIWGDWSNIYLWIIIVTSIIFSAIGFTDDYLKIKHKSSNGLSSSIKFLTQSLSAIVISTWIILISQKTTQPQLLIPFFNDIILPLSVFDFLILSYFVIVGSSNAVNLTDGLDGLAIMSVILISGALAIFAYFSGNYNFSNYLNMPYITGINELFIICAALIGSSLGFLWFNAYPAEIFMGDVGSLSLGAILAVIAILIRQEILLFIMGGVFVAETLSVIIQVGYYKLYKKRIFLMTPLHHHFEKQNISEPKIIVRFWIVTLILVLIGLASIKIH</sequence>
<proteinExistence type="inferred from homology"/>
<gene>
    <name evidence="1" type="primary">mraY</name>
    <name type="ordered locus">COSY_0291</name>
</gene>
<evidence type="ECO:0000255" key="1">
    <source>
        <dbReference type="HAMAP-Rule" id="MF_00038"/>
    </source>
</evidence>
<dbReference type="EC" id="2.7.8.13" evidence="1"/>
<dbReference type="EMBL" id="AP009247">
    <property type="protein sequence ID" value="BAF61420.1"/>
    <property type="molecule type" value="Genomic_DNA"/>
</dbReference>
<dbReference type="RefSeq" id="WP_011929690.1">
    <property type="nucleotide sequence ID" value="NC_009465.1"/>
</dbReference>
<dbReference type="SMR" id="A5CXA6"/>
<dbReference type="STRING" id="412965.COSY_0291"/>
<dbReference type="KEGG" id="vok:COSY_0291"/>
<dbReference type="eggNOG" id="COG0472">
    <property type="taxonomic scope" value="Bacteria"/>
</dbReference>
<dbReference type="HOGENOM" id="CLU_023982_0_0_6"/>
<dbReference type="OrthoDB" id="9805475at2"/>
<dbReference type="UniPathway" id="UPA00219"/>
<dbReference type="Proteomes" id="UP000000247">
    <property type="component" value="Chromosome"/>
</dbReference>
<dbReference type="GO" id="GO:0005886">
    <property type="term" value="C:plasma membrane"/>
    <property type="evidence" value="ECO:0007669"/>
    <property type="project" value="UniProtKB-SubCell"/>
</dbReference>
<dbReference type="GO" id="GO:0046872">
    <property type="term" value="F:metal ion binding"/>
    <property type="evidence" value="ECO:0007669"/>
    <property type="project" value="UniProtKB-KW"/>
</dbReference>
<dbReference type="GO" id="GO:0008963">
    <property type="term" value="F:phospho-N-acetylmuramoyl-pentapeptide-transferase activity"/>
    <property type="evidence" value="ECO:0007669"/>
    <property type="project" value="UniProtKB-UniRule"/>
</dbReference>
<dbReference type="GO" id="GO:0051992">
    <property type="term" value="F:UDP-N-acetylmuramoyl-L-alanyl-D-glutamyl-meso-2,6-diaminopimelyl-D-alanyl-D-alanine:undecaprenyl-phosphate transferase activity"/>
    <property type="evidence" value="ECO:0007669"/>
    <property type="project" value="RHEA"/>
</dbReference>
<dbReference type="GO" id="GO:0051301">
    <property type="term" value="P:cell division"/>
    <property type="evidence" value="ECO:0007669"/>
    <property type="project" value="UniProtKB-KW"/>
</dbReference>
<dbReference type="GO" id="GO:0071555">
    <property type="term" value="P:cell wall organization"/>
    <property type="evidence" value="ECO:0007669"/>
    <property type="project" value="UniProtKB-KW"/>
</dbReference>
<dbReference type="GO" id="GO:0009252">
    <property type="term" value="P:peptidoglycan biosynthetic process"/>
    <property type="evidence" value="ECO:0007669"/>
    <property type="project" value="UniProtKB-UniRule"/>
</dbReference>
<dbReference type="GO" id="GO:0008360">
    <property type="term" value="P:regulation of cell shape"/>
    <property type="evidence" value="ECO:0007669"/>
    <property type="project" value="UniProtKB-KW"/>
</dbReference>
<dbReference type="CDD" id="cd06852">
    <property type="entry name" value="GT_MraY"/>
    <property type="match status" value="1"/>
</dbReference>
<dbReference type="HAMAP" id="MF_00038">
    <property type="entry name" value="MraY"/>
    <property type="match status" value="1"/>
</dbReference>
<dbReference type="InterPro" id="IPR000715">
    <property type="entry name" value="Glycosyl_transferase_4"/>
</dbReference>
<dbReference type="InterPro" id="IPR003524">
    <property type="entry name" value="PNAcMuramoyl-5peptid_Trfase"/>
</dbReference>
<dbReference type="InterPro" id="IPR018480">
    <property type="entry name" value="PNAcMuramoyl-5peptid_Trfase_CS"/>
</dbReference>
<dbReference type="NCBIfam" id="TIGR00445">
    <property type="entry name" value="mraY"/>
    <property type="match status" value="1"/>
</dbReference>
<dbReference type="PANTHER" id="PTHR22926">
    <property type="entry name" value="PHOSPHO-N-ACETYLMURAMOYL-PENTAPEPTIDE-TRANSFERASE"/>
    <property type="match status" value="1"/>
</dbReference>
<dbReference type="PANTHER" id="PTHR22926:SF5">
    <property type="entry name" value="PHOSPHO-N-ACETYLMURAMOYL-PENTAPEPTIDE-TRANSFERASE HOMOLOG"/>
    <property type="match status" value="1"/>
</dbReference>
<dbReference type="Pfam" id="PF00953">
    <property type="entry name" value="Glycos_transf_4"/>
    <property type="match status" value="1"/>
</dbReference>
<dbReference type="Pfam" id="PF10555">
    <property type="entry name" value="MraY_sig1"/>
    <property type="match status" value="1"/>
</dbReference>
<dbReference type="PROSITE" id="PS01347">
    <property type="entry name" value="MRAY_1"/>
    <property type="match status" value="1"/>
</dbReference>
<dbReference type="PROSITE" id="PS01348">
    <property type="entry name" value="MRAY_2"/>
    <property type="match status" value="1"/>
</dbReference>
<reference key="1">
    <citation type="journal article" date="2007" name="Curr. Biol.">
        <title>Reduced genome of the thioautotrophic intracellular symbiont in a deep-sea clam, Calyptogena okutanii.</title>
        <authorList>
            <person name="Kuwahara H."/>
            <person name="Yoshida T."/>
            <person name="Takaki Y."/>
            <person name="Shimamura S."/>
            <person name="Nishi S."/>
            <person name="Harada M."/>
            <person name="Matsuyama K."/>
            <person name="Takishita K."/>
            <person name="Kawato M."/>
            <person name="Uematsu K."/>
            <person name="Fujiwara Y."/>
            <person name="Sato T."/>
            <person name="Kato C."/>
            <person name="Kitagawa M."/>
            <person name="Kato I."/>
            <person name="Maruyama T."/>
        </authorList>
    </citation>
    <scope>NUCLEOTIDE SEQUENCE [LARGE SCALE GENOMIC DNA]</scope>
    <source>
        <strain>HA</strain>
    </source>
</reference>